<reference key="1">
    <citation type="journal article" date="2005" name="Proc. Natl. Acad. Sci. U.S.A.">
        <title>Complete genome sequence of the probiotic lactic acid bacterium Lactobacillus acidophilus NCFM.</title>
        <authorList>
            <person name="Altermann E."/>
            <person name="Russell W.M."/>
            <person name="Azcarate-Peril M.A."/>
            <person name="Barrangou R."/>
            <person name="Buck B.L."/>
            <person name="McAuliffe O."/>
            <person name="Souther N."/>
            <person name="Dobson A."/>
            <person name="Duong T."/>
            <person name="Callanan M."/>
            <person name="Lick S."/>
            <person name="Hamrick A."/>
            <person name="Cano R."/>
            <person name="Klaenhammer T.R."/>
        </authorList>
    </citation>
    <scope>NUCLEOTIDE SEQUENCE [LARGE SCALE GENOMIC DNA]</scope>
    <source>
        <strain>ATCC 700396 / NCK56 / N2 / NCFM</strain>
    </source>
</reference>
<gene>
    <name evidence="1" type="primary">rplF</name>
    <name type="ordered locus">LBA0305</name>
</gene>
<dbReference type="EMBL" id="CP000033">
    <property type="protein sequence ID" value="AAV42198.1"/>
    <property type="molecule type" value="Genomic_DNA"/>
</dbReference>
<dbReference type="RefSeq" id="WP_003549039.1">
    <property type="nucleotide sequence ID" value="NC_006814.3"/>
</dbReference>
<dbReference type="RefSeq" id="YP_193229.1">
    <property type="nucleotide sequence ID" value="NC_006814.3"/>
</dbReference>
<dbReference type="SMR" id="Q5FM76"/>
<dbReference type="STRING" id="272621.LBA0305"/>
<dbReference type="GeneID" id="93290586"/>
<dbReference type="KEGG" id="lac:LBA0305"/>
<dbReference type="PATRIC" id="fig|272621.13.peg.292"/>
<dbReference type="eggNOG" id="COG0097">
    <property type="taxonomic scope" value="Bacteria"/>
</dbReference>
<dbReference type="HOGENOM" id="CLU_065464_1_2_9"/>
<dbReference type="OrthoDB" id="9805007at2"/>
<dbReference type="BioCyc" id="LACI272621:G1G49-300-MONOMER"/>
<dbReference type="Proteomes" id="UP000006381">
    <property type="component" value="Chromosome"/>
</dbReference>
<dbReference type="GO" id="GO:0022625">
    <property type="term" value="C:cytosolic large ribosomal subunit"/>
    <property type="evidence" value="ECO:0007669"/>
    <property type="project" value="TreeGrafter"/>
</dbReference>
<dbReference type="GO" id="GO:0019843">
    <property type="term" value="F:rRNA binding"/>
    <property type="evidence" value="ECO:0007669"/>
    <property type="project" value="UniProtKB-UniRule"/>
</dbReference>
<dbReference type="GO" id="GO:0003735">
    <property type="term" value="F:structural constituent of ribosome"/>
    <property type="evidence" value="ECO:0007669"/>
    <property type="project" value="InterPro"/>
</dbReference>
<dbReference type="GO" id="GO:0002181">
    <property type="term" value="P:cytoplasmic translation"/>
    <property type="evidence" value="ECO:0007669"/>
    <property type="project" value="TreeGrafter"/>
</dbReference>
<dbReference type="FunFam" id="3.90.930.12:FF:000001">
    <property type="entry name" value="50S ribosomal protein L6"/>
    <property type="match status" value="1"/>
</dbReference>
<dbReference type="Gene3D" id="3.90.930.12">
    <property type="entry name" value="Ribosomal protein L6, alpha-beta domain"/>
    <property type="match status" value="2"/>
</dbReference>
<dbReference type="HAMAP" id="MF_01365_B">
    <property type="entry name" value="Ribosomal_uL6_B"/>
    <property type="match status" value="1"/>
</dbReference>
<dbReference type="InterPro" id="IPR000702">
    <property type="entry name" value="Ribosomal_uL6-like"/>
</dbReference>
<dbReference type="InterPro" id="IPR036789">
    <property type="entry name" value="Ribosomal_uL6-like_a/b-dom_sf"/>
</dbReference>
<dbReference type="InterPro" id="IPR020040">
    <property type="entry name" value="Ribosomal_uL6_a/b-dom"/>
</dbReference>
<dbReference type="InterPro" id="IPR019906">
    <property type="entry name" value="Ribosomal_uL6_bac-type"/>
</dbReference>
<dbReference type="InterPro" id="IPR002358">
    <property type="entry name" value="Ribosomal_uL6_CS"/>
</dbReference>
<dbReference type="NCBIfam" id="TIGR03654">
    <property type="entry name" value="L6_bact"/>
    <property type="match status" value="1"/>
</dbReference>
<dbReference type="PANTHER" id="PTHR11655">
    <property type="entry name" value="60S/50S RIBOSOMAL PROTEIN L6/L9"/>
    <property type="match status" value="1"/>
</dbReference>
<dbReference type="PANTHER" id="PTHR11655:SF14">
    <property type="entry name" value="LARGE RIBOSOMAL SUBUNIT PROTEIN UL6M"/>
    <property type="match status" value="1"/>
</dbReference>
<dbReference type="Pfam" id="PF00347">
    <property type="entry name" value="Ribosomal_L6"/>
    <property type="match status" value="2"/>
</dbReference>
<dbReference type="PIRSF" id="PIRSF002162">
    <property type="entry name" value="Ribosomal_L6"/>
    <property type="match status" value="1"/>
</dbReference>
<dbReference type="PRINTS" id="PR00059">
    <property type="entry name" value="RIBOSOMALL6"/>
</dbReference>
<dbReference type="SUPFAM" id="SSF56053">
    <property type="entry name" value="Ribosomal protein L6"/>
    <property type="match status" value="2"/>
</dbReference>
<dbReference type="PROSITE" id="PS00525">
    <property type="entry name" value="RIBOSOMAL_L6_1"/>
    <property type="match status" value="1"/>
</dbReference>
<accession>Q5FM76</accession>
<feature type="chain" id="PRO_0000260878" description="Large ribosomal subunit protein uL6">
    <location>
        <begin position="1"/>
        <end position="176"/>
    </location>
</feature>
<name>RL6_LACAC</name>
<keyword id="KW-1185">Reference proteome</keyword>
<keyword id="KW-0687">Ribonucleoprotein</keyword>
<keyword id="KW-0689">Ribosomal protein</keyword>
<keyword id="KW-0694">RNA-binding</keyword>
<keyword id="KW-0699">rRNA-binding</keyword>
<organism>
    <name type="scientific">Lactobacillus acidophilus (strain ATCC 700396 / NCK56 / N2 / NCFM)</name>
    <dbReference type="NCBI Taxonomy" id="272621"/>
    <lineage>
        <taxon>Bacteria</taxon>
        <taxon>Bacillati</taxon>
        <taxon>Bacillota</taxon>
        <taxon>Bacilli</taxon>
        <taxon>Lactobacillales</taxon>
        <taxon>Lactobacillaceae</taxon>
        <taxon>Lactobacillus</taxon>
    </lineage>
</organism>
<proteinExistence type="inferred from homology"/>
<comment type="function">
    <text evidence="1">This protein binds to the 23S rRNA, and is important in its secondary structure. It is located near the subunit interface in the base of the L7/L12 stalk, and near the tRNA binding site of the peptidyltransferase center.</text>
</comment>
<comment type="subunit">
    <text evidence="1">Part of the 50S ribosomal subunit.</text>
</comment>
<comment type="similarity">
    <text evidence="1">Belongs to the universal ribosomal protein uL6 family.</text>
</comment>
<sequence length="176" mass="19173">MSRIGLKTIEVPDSVTVTKEGDNITVKGPKGELTRYFDPKITFEQNDGEINFSRSSESDKALHGTERANLASMIEGVLNGYKKTLKLIGVGYRAQAQGNKITLNVGYSHPVVLTAPEGVSVKATSATDVEVEGVSKQDVGQFAAEIRAVRPPEPYKGKGIRYVDEYVRRKEGKTGK</sequence>
<protein>
    <recommendedName>
        <fullName evidence="1">Large ribosomal subunit protein uL6</fullName>
    </recommendedName>
    <alternativeName>
        <fullName evidence="2">50S ribosomal protein L6</fullName>
    </alternativeName>
</protein>
<evidence type="ECO:0000255" key="1">
    <source>
        <dbReference type="HAMAP-Rule" id="MF_01365"/>
    </source>
</evidence>
<evidence type="ECO:0000305" key="2"/>